<organism>
    <name type="scientific">Vibrio parahaemolyticus serotype O3:K6 (strain RIMD 2210633)</name>
    <dbReference type="NCBI Taxonomy" id="223926"/>
    <lineage>
        <taxon>Bacteria</taxon>
        <taxon>Pseudomonadati</taxon>
        <taxon>Pseudomonadota</taxon>
        <taxon>Gammaproteobacteria</taxon>
        <taxon>Vibrionales</taxon>
        <taxon>Vibrionaceae</taxon>
        <taxon>Vibrio</taxon>
    </lineage>
</organism>
<evidence type="ECO:0000255" key="1">
    <source>
        <dbReference type="HAMAP-Rule" id="MF_00069"/>
    </source>
</evidence>
<feature type="chain" id="PRO_0000151687" description="Hydroxylamine reductase">
    <location>
        <begin position="1"/>
        <end position="553"/>
    </location>
</feature>
<feature type="binding site" evidence="1">
    <location>
        <position position="3"/>
    </location>
    <ligand>
        <name>[2Fe-2S] cluster</name>
        <dbReference type="ChEBI" id="CHEBI:190135"/>
    </ligand>
</feature>
<feature type="binding site" evidence="1">
    <location>
        <position position="6"/>
    </location>
    <ligand>
        <name>[2Fe-2S] cluster</name>
        <dbReference type="ChEBI" id="CHEBI:190135"/>
    </ligand>
</feature>
<feature type="binding site" evidence="1">
    <location>
        <position position="18"/>
    </location>
    <ligand>
        <name>[2Fe-2S] cluster</name>
        <dbReference type="ChEBI" id="CHEBI:190135"/>
    </ligand>
</feature>
<feature type="binding site" evidence="1">
    <location>
        <position position="25"/>
    </location>
    <ligand>
        <name>[2Fe-2S] cluster</name>
        <dbReference type="ChEBI" id="CHEBI:190135"/>
    </ligand>
</feature>
<feature type="binding site" evidence="1">
    <location>
        <position position="252"/>
    </location>
    <ligand>
        <name>hybrid [4Fe-2O-2S] cluster</name>
        <dbReference type="ChEBI" id="CHEBI:60519"/>
    </ligand>
</feature>
<feature type="binding site" evidence="1">
    <location>
        <position position="276"/>
    </location>
    <ligand>
        <name>hybrid [4Fe-2O-2S] cluster</name>
        <dbReference type="ChEBI" id="CHEBI:60519"/>
    </ligand>
</feature>
<feature type="binding site" evidence="1">
    <location>
        <position position="320"/>
    </location>
    <ligand>
        <name>hybrid [4Fe-2O-2S] cluster</name>
        <dbReference type="ChEBI" id="CHEBI:60519"/>
    </ligand>
</feature>
<feature type="binding site" description="via persulfide group" evidence="1">
    <location>
        <position position="408"/>
    </location>
    <ligand>
        <name>hybrid [4Fe-2O-2S] cluster</name>
        <dbReference type="ChEBI" id="CHEBI:60519"/>
    </ligand>
</feature>
<feature type="binding site" evidence="1">
    <location>
        <position position="436"/>
    </location>
    <ligand>
        <name>hybrid [4Fe-2O-2S] cluster</name>
        <dbReference type="ChEBI" id="CHEBI:60519"/>
    </ligand>
</feature>
<feature type="binding site" evidence="1">
    <location>
        <position position="461"/>
    </location>
    <ligand>
        <name>hybrid [4Fe-2O-2S] cluster</name>
        <dbReference type="ChEBI" id="CHEBI:60519"/>
    </ligand>
</feature>
<feature type="binding site" evidence="1">
    <location>
        <position position="495"/>
    </location>
    <ligand>
        <name>hybrid [4Fe-2O-2S] cluster</name>
        <dbReference type="ChEBI" id="CHEBI:60519"/>
    </ligand>
</feature>
<feature type="binding site" evidence="1">
    <location>
        <position position="497"/>
    </location>
    <ligand>
        <name>hybrid [4Fe-2O-2S] cluster</name>
        <dbReference type="ChEBI" id="CHEBI:60519"/>
    </ligand>
</feature>
<feature type="modified residue" description="Cysteine persulfide" evidence="1">
    <location>
        <position position="408"/>
    </location>
</feature>
<accession>Q87QG0</accession>
<reference key="1">
    <citation type="journal article" date="2003" name="Lancet">
        <title>Genome sequence of Vibrio parahaemolyticus: a pathogenic mechanism distinct from that of V. cholerae.</title>
        <authorList>
            <person name="Makino K."/>
            <person name="Oshima K."/>
            <person name="Kurokawa K."/>
            <person name="Yokoyama K."/>
            <person name="Uda T."/>
            <person name="Tagomori K."/>
            <person name="Iijima Y."/>
            <person name="Najima M."/>
            <person name="Nakano M."/>
            <person name="Yamashita A."/>
            <person name="Kubota Y."/>
            <person name="Kimura S."/>
            <person name="Yasunaga T."/>
            <person name="Honda T."/>
            <person name="Shinagawa H."/>
            <person name="Hattori M."/>
            <person name="Iida T."/>
        </authorList>
    </citation>
    <scope>NUCLEOTIDE SEQUENCE [LARGE SCALE GENOMIC DNA]</scope>
    <source>
        <strain>RIMD 2210633</strain>
    </source>
</reference>
<name>HCP_VIBPA</name>
<sequence>MFCIQCEQTIQTPAVKGCSFAQGMCGKTSEVSDLQDVLVYTLQGVSFWASKALEFNIINDEINQWAPKAFFSTLTNVNFDPERILELTSQAANYKALLKEQVMSAATLSNTNLADIPAVANFELPNSAEAILAFAPQVAVNRGKDQVHEDVIGLRLLCLYGLKGAAAYMEHARVLEQTNNDIYAEYHEIMAWLGTDPEDLGELLDCSMRIGLMNYKVMEMLDQGETTTFGHPEPTTVNVKPVKGKCILVSGHDLHDLEKILQQTEGKGINVYTNGEMLPAHGYPELKKYPHLVGNYGSAWQNQQKEFANFPGAIVMTSNCLLNPNVGQYADRLFTRSIVGWPGVAHIEGDDFSQVIECALAQDGFQHDEIEHHITVGFSRNALMNAAPAVIDQVKQGNIKHFFLVGGCDGDKAERSYYTDFTAEAPEDTLILTLACGKFRFNKNTFGDINGIPRLLDVGQCNDAYSAIQLALALAKEFDCDINELPLTLVLSWFEQKAIVILLTLFALGVKGIYTGPTAPAFLTPNLIAIIQEKFDMRSIGNVQDDLKAILAA</sequence>
<gene>
    <name evidence="1" type="primary">hcp</name>
    <name type="ordered locus">VP1189</name>
</gene>
<protein>
    <recommendedName>
        <fullName evidence="1">Hydroxylamine reductase</fullName>
        <ecNumber evidence="1">1.7.99.1</ecNumber>
    </recommendedName>
    <alternativeName>
        <fullName evidence="1">Hybrid-cluster protein</fullName>
        <shortName evidence="1">HCP</shortName>
    </alternativeName>
    <alternativeName>
        <fullName evidence="1">Prismane protein</fullName>
    </alternativeName>
</protein>
<proteinExistence type="inferred from homology"/>
<keyword id="KW-0001">2Fe-2S</keyword>
<keyword id="KW-0963">Cytoplasm</keyword>
<keyword id="KW-0408">Iron</keyword>
<keyword id="KW-0411">Iron-sulfur</keyword>
<keyword id="KW-0479">Metal-binding</keyword>
<keyword id="KW-0560">Oxidoreductase</keyword>
<comment type="function">
    <text evidence="1">Catalyzes the reduction of hydroxylamine to form NH(3) and H(2)O.</text>
</comment>
<comment type="catalytic activity">
    <reaction evidence="1">
        <text>A + NH4(+) + H2O = hydroxylamine + AH2 + H(+)</text>
        <dbReference type="Rhea" id="RHEA:22052"/>
        <dbReference type="ChEBI" id="CHEBI:13193"/>
        <dbReference type="ChEBI" id="CHEBI:15377"/>
        <dbReference type="ChEBI" id="CHEBI:15378"/>
        <dbReference type="ChEBI" id="CHEBI:15429"/>
        <dbReference type="ChEBI" id="CHEBI:17499"/>
        <dbReference type="ChEBI" id="CHEBI:28938"/>
        <dbReference type="EC" id="1.7.99.1"/>
    </reaction>
</comment>
<comment type="cofactor">
    <cofactor evidence="1">
        <name>[2Fe-2S] cluster</name>
        <dbReference type="ChEBI" id="CHEBI:190135"/>
    </cofactor>
    <text evidence="1">Binds 1 [2Fe-2S] cluster.</text>
</comment>
<comment type="cofactor">
    <cofactor evidence="1">
        <name>hybrid [4Fe-2O-2S] cluster</name>
        <dbReference type="ChEBI" id="CHEBI:60519"/>
    </cofactor>
    <text evidence="1">Binds 1 hybrid [4Fe-2O-2S] cluster.</text>
</comment>
<comment type="subcellular location">
    <subcellularLocation>
        <location evidence="1">Cytoplasm</location>
    </subcellularLocation>
</comment>
<comment type="similarity">
    <text evidence="1">Belongs to the HCP family.</text>
</comment>
<dbReference type="EC" id="1.7.99.1" evidence="1"/>
<dbReference type="EMBL" id="BA000031">
    <property type="protein sequence ID" value="BAC59452.1"/>
    <property type="molecule type" value="Genomic_DNA"/>
</dbReference>
<dbReference type="RefSeq" id="NP_797568.1">
    <property type="nucleotide sequence ID" value="NC_004603.1"/>
</dbReference>
<dbReference type="RefSeq" id="WP_005462358.1">
    <property type="nucleotide sequence ID" value="NC_004603.1"/>
</dbReference>
<dbReference type="SMR" id="Q87QG0"/>
<dbReference type="GeneID" id="1188694"/>
<dbReference type="KEGG" id="vpa:VP1189"/>
<dbReference type="PATRIC" id="fig|223926.6.peg.1131"/>
<dbReference type="eggNOG" id="COG1151">
    <property type="taxonomic scope" value="Bacteria"/>
</dbReference>
<dbReference type="HOGENOM" id="CLU_038344_2_0_6"/>
<dbReference type="Proteomes" id="UP000002493">
    <property type="component" value="Chromosome 1"/>
</dbReference>
<dbReference type="GO" id="GO:0005737">
    <property type="term" value="C:cytoplasm"/>
    <property type="evidence" value="ECO:0007669"/>
    <property type="project" value="UniProtKB-SubCell"/>
</dbReference>
<dbReference type="GO" id="GO:0051537">
    <property type="term" value="F:2 iron, 2 sulfur cluster binding"/>
    <property type="evidence" value="ECO:0007669"/>
    <property type="project" value="UniProtKB-KW"/>
</dbReference>
<dbReference type="GO" id="GO:0050418">
    <property type="term" value="F:hydroxylamine reductase activity"/>
    <property type="evidence" value="ECO:0007669"/>
    <property type="project" value="UniProtKB-UniRule"/>
</dbReference>
<dbReference type="GO" id="GO:0046872">
    <property type="term" value="F:metal ion binding"/>
    <property type="evidence" value="ECO:0007669"/>
    <property type="project" value="UniProtKB-KW"/>
</dbReference>
<dbReference type="GO" id="GO:0004601">
    <property type="term" value="F:peroxidase activity"/>
    <property type="evidence" value="ECO:0007669"/>
    <property type="project" value="TreeGrafter"/>
</dbReference>
<dbReference type="GO" id="GO:0042542">
    <property type="term" value="P:response to hydrogen peroxide"/>
    <property type="evidence" value="ECO:0007669"/>
    <property type="project" value="TreeGrafter"/>
</dbReference>
<dbReference type="CDD" id="cd01914">
    <property type="entry name" value="HCP"/>
    <property type="match status" value="1"/>
</dbReference>
<dbReference type="FunFam" id="1.20.1270.20:FF:000001">
    <property type="entry name" value="Hydroxylamine reductase"/>
    <property type="match status" value="1"/>
</dbReference>
<dbReference type="FunFam" id="1.20.1270.20:FF:000002">
    <property type="entry name" value="Hydroxylamine reductase"/>
    <property type="match status" value="1"/>
</dbReference>
<dbReference type="FunFam" id="3.40.50.2030:FF:000001">
    <property type="entry name" value="Hydroxylamine reductase"/>
    <property type="match status" value="1"/>
</dbReference>
<dbReference type="FunFam" id="3.40.50.2030:FF:000002">
    <property type="entry name" value="Hydroxylamine reductase"/>
    <property type="match status" value="1"/>
</dbReference>
<dbReference type="Gene3D" id="1.20.1270.20">
    <property type="match status" value="2"/>
</dbReference>
<dbReference type="Gene3D" id="3.40.50.2030">
    <property type="match status" value="2"/>
</dbReference>
<dbReference type="HAMAP" id="MF_00069">
    <property type="entry name" value="Hydroxylam_reduct"/>
    <property type="match status" value="1"/>
</dbReference>
<dbReference type="InterPro" id="IPR004137">
    <property type="entry name" value="HCP/CODH"/>
</dbReference>
<dbReference type="InterPro" id="IPR010048">
    <property type="entry name" value="Hydroxylam_reduct"/>
</dbReference>
<dbReference type="InterPro" id="IPR016099">
    <property type="entry name" value="Prismane-like_a/b-sand"/>
</dbReference>
<dbReference type="InterPro" id="IPR011254">
    <property type="entry name" value="Prismane-like_sf"/>
</dbReference>
<dbReference type="InterPro" id="IPR016100">
    <property type="entry name" value="Prismane_a-bundle"/>
</dbReference>
<dbReference type="NCBIfam" id="TIGR01703">
    <property type="entry name" value="hybrid_clust"/>
    <property type="match status" value="1"/>
</dbReference>
<dbReference type="NCBIfam" id="NF003658">
    <property type="entry name" value="PRK05290.1"/>
    <property type="match status" value="1"/>
</dbReference>
<dbReference type="PANTHER" id="PTHR30109">
    <property type="entry name" value="HYDROXYLAMINE REDUCTASE"/>
    <property type="match status" value="1"/>
</dbReference>
<dbReference type="PANTHER" id="PTHR30109:SF0">
    <property type="entry name" value="HYDROXYLAMINE REDUCTASE"/>
    <property type="match status" value="1"/>
</dbReference>
<dbReference type="Pfam" id="PF03063">
    <property type="entry name" value="Prismane"/>
    <property type="match status" value="1"/>
</dbReference>
<dbReference type="PIRSF" id="PIRSF000076">
    <property type="entry name" value="HCP"/>
    <property type="match status" value="1"/>
</dbReference>
<dbReference type="SUPFAM" id="SSF56821">
    <property type="entry name" value="Prismane protein-like"/>
    <property type="match status" value="1"/>
</dbReference>